<feature type="signal peptide" evidence="4">
    <location>
        <begin position="1"/>
        <end position="20"/>
    </location>
</feature>
<feature type="chain" id="PRO_5014108296" description="Low affinity immunoglobulin gamma Fc region receptor III-A" evidence="4">
    <location>
        <begin position="21"/>
        <end position="250"/>
    </location>
</feature>
<feature type="topological domain" description="Extracellular" evidence="8">
    <location>
        <begin position="21"/>
        <end position="207"/>
    </location>
</feature>
<feature type="transmembrane region" description="Helical" evidence="4">
    <location>
        <begin position="208"/>
        <end position="228"/>
    </location>
</feature>
<feature type="topological domain" description="Cytoplasmic" evidence="8">
    <location>
        <begin position="229"/>
        <end position="250"/>
    </location>
</feature>
<feature type="domain" description="Ig-like C2-type 1" evidence="5">
    <location>
        <begin position="32"/>
        <end position="105"/>
    </location>
</feature>
<feature type="domain" description="Ig-like C2-type 2" evidence="5">
    <location>
        <begin position="120"/>
        <end position="189"/>
    </location>
</feature>
<feature type="site" description="Important for receptor turnover" evidence="2">
    <location>
        <position position="221"/>
    </location>
</feature>
<feature type="glycosylation site" description="N-linked (GlcNAc...) asparagine" evidence="6">
    <location>
        <position position="63"/>
    </location>
</feature>
<feature type="glycosylation site" description="N-linked (GlcNAc...) asparagine" evidence="6">
    <location>
        <position position="133"/>
    </location>
</feature>
<feature type="glycosylation site" description="N-linked (GlcNAc...) asparagine" evidence="6">
    <location>
        <position position="180"/>
    </location>
</feature>
<feature type="glycosylation site" description="N-linked (GlcNAc...) asparagine" evidence="6">
    <location>
        <position position="187"/>
    </location>
</feature>
<feature type="disulfide bond" evidence="5">
    <location>
        <begin position="47"/>
        <end position="89"/>
    </location>
</feature>
<feature type="disulfide bond" evidence="5">
    <location>
        <begin position="128"/>
        <end position="172"/>
    </location>
</feature>
<gene>
    <name evidence="7" type="primary">FCGR3A</name>
    <name type="synonym">CD16</name>
</gene>
<proteinExistence type="evidence at transcript level"/>
<dbReference type="EMBL" id="AB025315">
    <property type="protein sequence ID" value="BAA92348.1"/>
    <property type="molecule type" value="mRNA"/>
</dbReference>
<dbReference type="EMBL" id="AANG04002036">
    <property type="status" value="NOT_ANNOTATED_CDS"/>
    <property type="molecule type" value="Genomic_DNA"/>
</dbReference>
<dbReference type="RefSeq" id="NP_001009205.1">
    <property type="nucleotide sequence ID" value="NM_001009205.1"/>
</dbReference>
<dbReference type="SMR" id="Q9N2I5"/>
<dbReference type="STRING" id="9685.ENSFCAP00000000963"/>
<dbReference type="GlyCosmos" id="Q9N2I5">
    <property type="glycosylation" value="4 sites, No reported glycans"/>
</dbReference>
<dbReference type="PaxDb" id="9685-ENSFCAP00000000963"/>
<dbReference type="Ensembl" id="ENSFCAT00000001034.6">
    <property type="protein sequence ID" value="ENSFCAP00000000963.5"/>
    <property type="gene ID" value="ENSFCAG00000001034.6"/>
</dbReference>
<dbReference type="GeneID" id="493677"/>
<dbReference type="KEGG" id="fca:493677"/>
<dbReference type="CTD" id="2214"/>
<dbReference type="eggNOG" id="ENOG502RU1M">
    <property type="taxonomic scope" value="Eukaryota"/>
</dbReference>
<dbReference type="GeneTree" id="ENSGT01050000244808"/>
<dbReference type="HOGENOM" id="CLU_023383_1_0_1"/>
<dbReference type="InParanoid" id="Q9N2I5"/>
<dbReference type="OMA" id="GDNSTQW"/>
<dbReference type="OrthoDB" id="8917564at2759"/>
<dbReference type="Proteomes" id="UP000011712">
    <property type="component" value="Chromosome F1"/>
</dbReference>
<dbReference type="Bgee" id="ENSFCAG00000001034">
    <property type="expression patterns" value="Expressed in spleen and 10 other cell types or tissues"/>
</dbReference>
<dbReference type="GO" id="GO:0009897">
    <property type="term" value="C:external side of plasma membrane"/>
    <property type="evidence" value="ECO:0000318"/>
    <property type="project" value="GO_Central"/>
</dbReference>
<dbReference type="GO" id="GO:0019864">
    <property type="term" value="F:IgG binding"/>
    <property type="evidence" value="ECO:0007669"/>
    <property type="project" value="UniProtKB-KW"/>
</dbReference>
<dbReference type="GO" id="GO:0019770">
    <property type="term" value="F:IgG receptor activity"/>
    <property type="evidence" value="ECO:0000318"/>
    <property type="project" value="GO_Central"/>
</dbReference>
<dbReference type="GO" id="GO:0001788">
    <property type="term" value="P:antibody-dependent cellular cytotoxicity"/>
    <property type="evidence" value="ECO:0000318"/>
    <property type="project" value="GO_Central"/>
</dbReference>
<dbReference type="GO" id="GO:0007166">
    <property type="term" value="P:cell surface receptor signaling pathway"/>
    <property type="evidence" value="ECO:0000318"/>
    <property type="project" value="GO_Central"/>
</dbReference>
<dbReference type="CDD" id="cd05753">
    <property type="entry name" value="Ig2_FcgammaR_like"/>
    <property type="match status" value="1"/>
</dbReference>
<dbReference type="FunFam" id="2.60.40.10:FF:000217">
    <property type="entry name" value="High affinity immunoglobulin gamma Fc receptor I"/>
    <property type="match status" value="1"/>
</dbReference>
<dbReference type="FunFam" id="2.60.40.10:FF:000356">
    <property type="entry name" value="Low affinity immunoglobulin gamma Fc region receptor III-A"/>
    <property type="match status" value="1"/>
</dbReference>
<dbReference type="Gene3D" id="2.60.40.10">
    <property type="entry name" value="Immunoglobulins"/>
    <property type="match status" value="2"/>
</dbReference>
<dbReference type="InterPro" id="IPR007110">
    <property type="entry name" value="Ig-like_dom"/>
</dbReference>
<dbReference type="InterPro" id="IPR036179">
    <property type="entry name" value="Ig-like_dom_sf"/>
</dbReference>
<dbReference type="InterPro" id="IPR013783">
    <property type="entry name" value="Ig-like_fold"/>
</dbReference>
<dbReference type="InterPro" id="IPR050488">
    <property type="entry name" value="Ig_Fc_receptor"/>
</dbReference>
<dbReference type="InterPro" id="IPR003599">
    <property type="entry name" value="Ig_sub"/>
</dbReference>
<dbReference type="PANTHER" id="PTHR11481">
    <property type="entry name" value="IMMUNOGLOBULIN FC RECEPTOR"/>
    <property type="match status" value="1"/>
</dbReference>
<dbReference type="PANTHER" id="PTHR11481:SF103">
    <property type="entry name" value="LOW AFFINITY IMMUNOGLOBULIN GAMMA FC REGION RECEPTOR III-A-RELATED"/>
    <property type="match status" value="1"/>
</dbReference>
<dbReference type="Pfam" id="PF13895">
    <property type="entry name" value="Ig_2"/>
    <property type="match status" value="2"/>
</dbReference>
<dbReference type="SMART" id="SM00409">
    <property type="entry name" value="IG"/>
    <property type="match status" value="2"/>
</dbReference>
<dbReference type="SUPFAM" id="SSF48726">
    <property type="entry name" value="Immunoglobulin"/>
    <property type="match status" value="2"/>
</dbReference>
<dbReference type="PROSITE" id="PS50835">
    <property type="entry name" value="IG_LIKE"/>
    <property type="match status" value="2"/>
</dbReference>
<comment type="function">
    <text evidence="1 2 3">Receptor for the invariable Fc fragment of immunoglobulin gamma (IgG). Optimally activated upon binding of clustered antigen-IgG complexes displayed on cell surfaces, triggers lysis of antibody-coated cells, a process known as antibody-dependent cellular cytotoxicity (ADCC). Does not bind free monomeric IgG, thus avoiding inappropriate effector cell activation in the absence of antigenic trigger (By similarity). Mediates IgG effector functions on natural killer (NK) cells. Binds antigen-IgG complexes generated upon infection and triggers NK cell-dependent cytokine production and degranulation to limit viral load and propagation (By similarity). Fc-binding subunit that associates with FCER1G adapter to form functional signaling complexes. Following the engagement of antigen-IgG complexes, triggers phosphorylation of immunoreceptor tyrosine-based activation motif (ITAM)-containing adapter with subsequent activation of phosphatidylinositol 3-kinase signaling and sustained elevation of intracellular calcium that ultimately drive NK cell activation (By similarity). Mediates enhanced ADCC in response to afucosylated IgGs (PubMed:34485821).</text>
</comment>
<comment type="subunit">
    <text evidence="2">Forms a heterooligomeric complex with ITAM-containing signaling subunits FCER1G. Interacts (via transmembrane domain) with signaling subunits; this interaction is a prerequisite for receptor complex expression on the cell surface and intracellular signal transduction. Binds the Fc region of antigen-complexed IgG.</text>
</comment>
<comment type="subcellular location">
    <subcellularLocation>
        <location evidence="2">Cell membrane</location>
        <topology evidence="4">Single-pass membrane protein</topology>
    </subcellularLocation>
</comment>
<sequence>MWRLLSPTALLLLVSAGTRAADLSKAMVVLEPEWNRVLVSDGVILKCEGAYPPGDNSAQWWHNGSVIPHRAPSYSIEAARSEDSGEYKCQTGLSEASDPVQLEVHTGWLLLQAPRWVFQEGDTIQLRCHSWKNKTVQKVQYFQDGRGKMFFHKNSDFYIPKATSKHSGSYFCRGLIGNKNESSEAVNITVQGPPVPSTSTFLPHWYQIAFFLVTALLFVVDTGLHVAVQRDLQSSVKEWKDGKVTWSHGP</sequence>
<protein>
    <recommendedName>
        <fullName evidence="3">Low affinity immunoglobulin gamma Fc region receptor III-A</fullName>
        <shortName>IgG Fc receptor III-A</shortName>
    </recommendedName>
    <alternativeName>
        <fullName>Fc-gamma RIII-alpha</fullName>
        <shortName evidence="3">FcgammaRIIIA</shortName>
    </alternativeName>
    <cdAntigenName evidence="2">CD16a</cdAntigenName>
</protein>
<reference key="1">
    <citation type="journal article" date="2000" name="Vet. Immunol. Immunopathol.">
        <title>Molecular cloning and sequencing of the cDNA encoding the feline FcgammaRIIIA (CD16) homologue.</title>
        <authorList>
            <person name="Nishimura Y."/>
            <person name="Miyazawa T."/>
            <person name="Ikeda Y."/>
            <person name="Izumiya Y."/>
            <person name="Nakamura K."/>
            <person name="Sato E."/>
            <person name="Mikami T."/>
            <person name="Takahashi E."/>
        </authorList>
    </citation>
    <scope>NUCLEOTIDE SEQUENCE [MRNA]</scope>
</reference>
<reference key="2">
    <citation type="journal article" date="2007" name="Genome Res.">
        <title>Initial sequence and comparative analysis of the cat genome.</title>
        <authorList>
            <person name="Pontius J.U."/>
            <person name="Mullikin J.C."/>
            <person name="Smith D.R."/>
            <person name="Lindblad-Toh K."/>
            <person name="Gnerre S."/>
            <person name="Clamp M."/>
            <person name="Chang J."/>
            <person name="Stephens R."/>
            <person name="Neelam B."/>
            <person name="Volfovsky N."/>
            <person name="Schaffer A.A."/>
            <person name="Agarwala R."/>
            <person name="Narfstrom K."/>
            <person name="Murphy W.J."/>
            <person name="Giger U."/>
            <person name="Roca A.L."/>
            <person name="Antunes A."/>
            <person name="Menotti-Raymond M."/>
            <person name="Yuhki N."/>
            <person name="Pecon-Slattery J."/>
            <person name="Johnson W.E."/>
            <person name="Bourque G."/>
            <person name="Tesler G."/>
            <person name="O'Brien S.J."/>
        </authorList>
    </citation>
    <scope>NUCLEOTIDE SEQUENCE [LARGE SCALE GENOMIC DNA]</scope>
    <source>
        <strain>Abyssinian</strain>
    </source>
</reference>
<reference key="3">
    <citation type="journal article" date="1994" name="Bull. World Health Organ.">
        <title>Nomenclature of Fc receptors. IUIS/WHO Subcommittee on Nomenclature of Fc receptors.</title>
        <authorList>
            <person name="Conrad D."/>
            <person name="Cooper M."/>
            <person name="Fridman W.H."/>
            <person name="Kinet J.P."/>
            <person name="Ravetch J."/>
        </authorList>
    </citation>
    <scope>NOMENCLATURE</scope>
</reference>
<reference key="4">
    <citation type="journal article" date="2021" name="Antib Ther">
        <title>Cross-species higher sensitivities of FcgammaRIIIA/FcgammaRIV to afucosylated IgG for enhanced ADCC.</title>
        <authorList>
            <person name="Mao C."/>
            <person name="Near R."/>
            <person name="Zhong X."/>
            <person name="Gao W."/>
        </authorList>
    </citation>
    <scope>FUNCTION</scope>
</reference>
<organism>
    <name type="scientific">Felis catus</name>
    <name type="common">Cat</name>
    <name type="synonym">Felis silvestris catus</name>
    <dbReference type="NCBI Taxonomy" id="9685"/>
    <lineage>
        <taxon>Eukaryota</taxon>
        <taxon>Metazoa</taxon>
        <taxon>Chordata</taxon>
        <taxon>Craniata</taxon>
        <taxon>Vertebrata</taxon>
        <taxon>Euteleostomi</taxon>
        <taxon>Mammalia</taxon>
        <taxon>Eutheria</taxon>
        <taxon>Laurasiatheria</taxon>
        <taxon>Carnivora</taxon>
        <taxon>Feliformia</taxon>
        <taxon>Felidae</taxon>
        <taxon>Felinae</taxon>
        <taxon>Felis</taxon>
    </lineage>
</organism>
<name>FCG3A_FELCA</name>
<accession>Q9N2I5</accession>
<accession>M3VVW2</accession>
<keyword id="KW-1003">Cell membrane</keyword>
<keyword id="KW-1015">Disulfide bond</keyword>
<keyword id="KW-0325">Glycoprotein</keyword>
<keyword id="KW-0390">IgG-binding protein</keyword>
<keyword id="KW-0391">Immunity</keyword>
<keyword id="KW-0472">Membrane</keyword>
<keyword id="KW-0675">Receptor</keyword>
<keyword id="KW-1185">Reference proteome</keyword>
<keyword id="KW-0677">Repeat</keyword>
<keyword id="KW-0732">Signal</keyword>
<keyword id="KW-0812">Transmembrane</keyword>
<keyword id="KW-1133">Transmembrane helix</keyword>
<evidence type="ECO:0000250" key="1">
    <source>
        <dbReference type="UniProtKB" id="A0A0B4J1G0"/>
    </source>
</evidence>
<evidence type="ECO:0000250" key="2">
    <source>
        <dbReference type="UniProtKB" id="P08637"/>
    </source>
</evidence>
<evidence type="ECO:0000250" key="3">
    <source>
        <dbReference type="UniProtKB" id="Q28942"/>
    </source>
</evidence>
<evidence type="ECO:0000255" key="4"/>
<evidence type="ECO:0000255" key="5">
    <source>
        <dbReference type="PROSITE-ProRule" id="PRU00114"/>
    </source>
</evidence>
<evidence type="ECO:0000255" key="6">
    <source>
        <dbReference type="PROSITE-ProRule" id="PRU00498"/>
    </source>
</evidence>
<evidence type="ECO:0000303" key="7">
    <source>
    </source>
</evidence>
<evidence type="ECO:0000305" key="8"/>